<accession>P92527</accession>
<accession>A0A2P2CLG9</accession>
<accession>A7KNF3</accession>
<accession>Q6IDC1</accession>
<accession>Q8S883</accession>
<accession>Q8S8B9</accession>
<name>CCMC_ARATH</name>
<evidence type="ECO:0000255" key="1"/>
<evidence type="ECO:0000269" key="2">
    <source>
    </source>
</evidence>
<evidence type="ECO:0000269" key="3">
    <source>
    </source>
</evidence>
<evidence type="ECO:0000269" key="4">
    <source>
    </source>
</evidence>
<evidence type="ECO:0000305" key="5"/>
<evidence type="ECO:0000305" key="6">
    <source>
    </source>
</evidence>
<sequence length="256" mass="28798">MSVSLLQPSFLMSKTRSYAQILIGSWLFLTAMAIYLSLGVAPLDFQQGGNSRILYVHVPVAWMSIIVYIATAINTFLFLLTKHPLYLRSSGTGIEMGAFFTLFTLVTGGFWGRPMWGTFWVWDARLTSVFILFFIYLGALCFQKLSVELASILICVGLIDIPIIKFSVNWWNTLHQPGSISRFGTSIHVSMLIPILSNFANFLFLTCILFVLETRLLILSFLESSITEEIEAREGIPKPSSLALFASMAEWLKRPT</sequence>
<comment type="function">
    <text>May be involved in the export of heme to the mitochondrion for the biogenesis of c-type cytochromes.</text>
</comment>
<comment type="subcellular location">
    <subcellularLocation>
        <location evidence="5">Mitochondrion membrane</location>
        <topology evidence="5">Multi-pass membrane protein</topology>
    </subcellularLocation>
</comment>
<comment type="RNA editing">
    <location>
        <position position="35" evidence="2 3 4"/>
    </location>
    <location>
        <position position="45" evidence="2 3 4"/>
    </location>
    <location>
        <position position="60" evidence="2 3 4"/>
    </location>
    <location>
        <position position="62" evidence="2 3 4"/>
    </location>
    <location>
        <position position="88" evidence="2 3"/>
    </location>
    <location>
        <position position="111" evidence="2 3 4"/>
    </location>
    <location>
        <position position="132" evidence="2 3 4"/>
    </location>
    <location>
        <position position="134" evidence="2 3 4"/>
    </location>
    <location>
        <position position="141" evidence="2 3 4"/>
    </location>
    <location>
        <position position="149" evidence="2 3 4"/>
    </location>
    <location>
        <position position="153" evidence="2 3 4"/>
    </location>
    <location>
        <position position="155" evidence="2 3 4"/>
    </location>
    <location>
        <position position="156" evidence="2 3 4"/>
    </location>
    <location>
        <position position="158" evidence="2 3 4"/>
    </location>
    <location>
        <position position="166" evidence="2 3 4"/>
    </location>
    <location>
        <position position="174" evidence="2 3 4"/>
    </location>
    <location>
        <position position="183" evidence="2 3 4"/>
    </location>
    <location>
        <position position="190" evidence="2 3 4"/>
    </location>
    <location>
        <position position="192" evidence="2 3 4"/>
    </location>
    <location>
        <position position="203" evidence="2 3 4"/>
    </location>
    <location>
        <position position="205" evidence="2 3 4"/>
    </location>
    <location>
        <position position="207" evidence="2 3 4"/>
    </location>
    <location>
        <position position="217" evidence="2 3 4"/>
    </location>
    <location>
        <position position="219" evidence="2 3 4"/>
    </location>
    <location>
        <position position="225" evidence="2 3 4"/>
    </location>
    <text evidence="2 3">The stop codon at position 257 is created by RNA editing.</text>
</comment>
<comment type="miscellaneous">
    <text>A stretch of 270 kb of the mitochondrial genome is duplicated within the centromere of chromosome 2 resulting in the duplication of the gene. The expression of the duplicated genes (At2g07681 and At2g07771) is demonstrated.</text>
</comment>
<comment type="similarity">
    <text evidence="5">Belongs to the CcmC/CycZ/HelC family.</text>
</comment>
<comment type="caution">
    <text evidence="6">Was originally (PubMed:18299247) thought to belong to the ABC transporter family. Lacks the conserved ABC domain, which is one of the features of the ABC transporter family.</text>
</comment>
<proteinExistence type="evidence at transcript level"/>
<dbReference type="EMBL" id="Y08501">
    <property type="protein sequence ID" value="CAA69832.3"/>
    <property type="status" value="ALT_SEQ"/>
    <property type="molecule type" value="Genomic_DNA"/>
</dbReference>
<dbReference type="EMBL" id="BK010421">
    <property type="protein sequence ID" value="DAB41520.2"/>
    <property type="molecule type" value="Genomic_DNA"/>
</dbReference>
<dbReference type="EMBL" id="AC007143">
    <property type="protein sequence ID" value="AAM15415.1"/>
    <property type="status" value="ALT_SEQ"/>
    <property type="molecule type" value="Genomic_DNA"/>
</dbReference>
<dbReference type="EMBL" id="AC007730">
    <property type="protein sequence ID" value="AAM15509.1"/>
    <property type="status" value="ALT_SEQ"/>
    <property type="molecule type" value="Genomic_DNA"/>
</dbReference>
<dbReference type="EMBL" id="BT014752">
    <property type="protein sequence ID" value="AAT41735.1"/>
    <property type="status" value="ALT_SEQ"/>
    <property type="molecule type" value="mRNA"/>
</dbReference>
<dbReference type="EMBL" id="BT014995">
    <property type="protein sequence ID" value="AAT70446.1"/>
    <property type="status" value="ALT_SEQ"/>
    <property type="molecule type" value="mRNA"/>
</dbReference>
<dbReference type="EMBL" id="EF488896">
    <property type="protein sequence ID" value="ABS50608.1"/>
    <property type="status" value="ALT_SEQ"/>
    <property type="molecule type" value="mRNA"/>
</dbReference>
<dbReference type="EMBL" id="EF488897">
    <property type="protein sequence ID" value="ABS50609.1"/>
    <property type="status" value="ALT_SEQ"/>
    <property type="molecule type" value="mRNA"/>
</dbReference>
<dbReference type="RefSeq" id="NP_085546.2">
    <property type="nucleotide sequence ID" value="NC_001284.2"/>
</dbReference>
<dbReference type="RefSeq" id="NP_973435.1">
    <property type="nucleotide sequence ID" value="NM_201706.1"/>
</dbReference>
<dbReference type="SMR" id="P92527"/>
<dbReference type="STRING" id="3702.A0A2P2CLG9"/>
<dbReference type="GeneID" id="815357"/>
<dbReference type="KEGG" id="ath:AT2G07771"/>
<dbReference type="Araport" id="ATMG00900"/>
<dbReference type="TAIR" id="ATMG00900">
    <property type="gene designation" value="ABCI3"/>
</dbReference>
<dbReference type="InParanoid" id="P92527"/>
<dbReference type="OrthoDB" id="1365184at2759"/>
<dbReference type="PRO" id="PR:P92527"/>
<dbReference type="Proteomes" id="UP000006548">
    <property type="component" value="Mitochondrion MT"/>
</dbReference>
<dbReference type="GO" id="GO:0031966">
    <property type="term" value="C:mitochondrial membrane"/>
    <property type="evidence" value="ECO:0007669"/>
    <property type="project" value="UniProtKB-SubCell"/>
</dbReference>
<dbReference type="GO" id="GO:0020037">
    <property type="term" value="F:heme binding"/>
    <property type="evidence" value="ECO:0007669"/>
    <property type="project" value="InterPro"/>
</dbReference>
<dbReference type="GO" id="GO:0015232">
    <property type="term" value="F:heme transmembrane transporter activity"/>
    <property type="evidence" value="ECO:0007669"/>
    <property type="project" value="InterPro"/>
</dbReference>
<dbReference type="GO" id="GO:0017004">
    <property type="term" value="P:cytochrome complex assembly"/>
    <property type="evidence" value="ECO:0007669"/>
    <property type="project" value="UniProtKB-KW"/>
</dbReference>
<dbReference type="InterPro" id="IPR002541">
    <property type="entry name" value="Cyt_c_assembly"/>
</dbReference>
<dbReference type="InterPro" id="IPR003557">
    <property type="entry name" value="Cyt_c_biogenesis_CcmC"/>
</dbReference>
<dbReference type="InterPro" id="IPR045062">
    <property type="entry name" value="Cyt_c_biogenesis_CcsA/CcmC"/>
</dbReference>
<dbReference type="NCBIfam" id="TIGR01191">
    <property type="entry name" value="ccmC"/>
    <property type="match status" value="1"/>
</dbReference>
<dbReference type="PANTHER" id="PTHR30071:SF1">
    <property type="entry name" value="CYTOCHROME B_B6 PROTEIN-RELATED"/>
    <property type="match status" value="1"/>
</dbReference>
<dbReference type="PANTHER" id="PTHR30071">
    <property type="entry name" value="HEME EXPORTER PROTEIN C"/>
    <property type="match status" value="1"/>
</dbReference>
<dbReference type="Pfam" id="PF01578">
    <property type="entry name" value="Cytochrom_C_asm"/>
    <property type="match status" value="1"/>
</dbReference>
<dbReference type="PRINTS" id="PR01386">
    <property type="entry name" value="CCMCBIOGNSIS"/>
</dbReference>
<organism>
    <name type="scientific">Arabidopsis thaliana</name>
    <name type="common">Mouse-ear cress</name>
    <dbReference type="NCBI Taxonomy" id="3702"/>
    <lineage>
        <taxon>Eukaryota</taxon>
        <taxon>Viridiplantae</taxon>
        <taxon>Streptophyta</taxon>
        <taxon>Embryophyta</taxon>
        <taxon>Tracheophyta</taxon>
        <taxon>Spermatophyta</taxon>
        <taxon>Magnoliopsida</taxon>
        <taxon>eudicotyledons</taxon>
        <taxon>Gunneridae</taxon>
        <taxon>Pentapetalae</taxon>
        <taxon>rosids</taxon>
        <taxon>malvids</taxon>
        <taxon>Brassicales</taxon>
        <taxon>Brassicaceae</taxon>
        <taxon>Camelineae</taxon>
        <taxon>Arabidopsis</taxon>
    </lineage>
</organism>
<protein>
    <recommendedName>
        <fullName>Putative cytochrome c biosynthesis ccmC-like mitochondrial protein</fullName>
    </recommendedName>
    <alternativeName>
        <fullName>ABC transporter I family member 3</fullName>
        <shortName>ABC transporter ABCI.3</shortName>
        <shortName>AtABCI3</shortName>
    </alternativeName>
</protein>
<gene>
    <name type="primary">CCMC</name>
    <name type="synonym">ABCI3</name>
    <name type="synonym">ABCI4</name>
    <name type="synonym">ABCI5</name>
    <name type="synonym">CCB256</name>
    <name type="synonym">CCB3</name>
    <name type="ordered locus">AtMg00900</name>
</gene>
<feature type="chain" id="PRO_0000201561" description="Putative cytochrome c biosynthesis ccmC-like mitochondrial protein">
    <location>
        <begin position="1"/>
        <end position="256"/>
    </location>
</feature>
<feature type="transmembrane region" description="Helical" evidence="1">
    <location>
        <begin position="21"/>
        <end position="41"/>
    </location>
</feature>
<feature type="transmembrane region" description="Helical" evidence="1">
    <location>
        <begin position="60"/>
        <end position="80"/>
    </location>
</feature>
<feature type="transmembrane region" description="Helical" evidence="1">
    <location>
        <begin position="91"/>
        <end position="111"/>
    </location>
</feature>
<feature type="transmembrane region" description="Helical" evidence="1">
    <location>
        <begin position="129"/>
        <end position="149"/>
    </location>
</feature>
<feature type="transmembrane region" description="Helical" evidence="1">
    <location>
        <begin position="151"/>
        <end position="171"/>
    </location>
</feature>
<feature type="transmembrane region" description="Helical" evidence="1">
    <location>
        <begin position="192"/>
        <end position="212"/>
    </location>
</feature>
<feature type="sequence conflict" description="In Ref. 1; CAA69832, 3; AAM15415/AAM15509, 4; AAT41735/AAT70446 and 5; ABS50608/ABS50609." evidence="5" ref="1 3 4 5">
    <original>S</original>
    <variation>P</variation>
    <location>
        <position position="146"/>
    </location>
</feature>
<feature type="sequence conflict" description="In Ref. 3; AAM15415." evidence="5" ref="3">
    <original>G</original>
    <variation>S</variation>
    <location>
        <position position="184"/>
    </location>
</feature>
<keyword id="KW-0201">Cytochrome c-type biogenesis</keyword>
<keyword id="KW-0472">Membrane</keyword>
<keyword id="KW-0496">Mitochondrion</keyword>
<keyword id="KW-1185">Reference proteome</keyword>
<keyword id="KW-0691">RNA editing</keyword>
<keyword id="KW-0812">Transmembrane</keyword>
<keyword id="KW-1133">Transmembrane helix</keyword>
<geneLocation type="mitochondrion"/>
<reference key="1">
    <citation type="journal article" date="1997" name="Nat. Genet.">
        <title>The mitochondrial genome of Arabidopsis thaliana contains 57 genes in 366,924 nucleotides.</title>
        <authorList>
            <person name="Unseld M."/>
            <person name="Marienfeld J.R."/>
            <person name="Brandt P."/>
            <person name="Brennicke A."/>
        </authorList>
    </citation>
    <scope>NUCLEOTIDE SEQUENCE [LARGE SCALE GENOMIC DNA]</scope>
    <source>
        <strain>cv. C24</strain>
    </source>
</reference>
<reference key="2">
    <citation type="journal article" date="2018" name="Plant Cell">
        <title>Correction of persistent errors in Arabidopsis reference mitochondrial genomes.</title>
        <authorList>
            <person name="Sloan D.B."/>
            <person name="Wu Z."/>
            <person name="Sharbrough J."/>
        </authorList>
    </citation>
    <scope>NUCLEOTIDE SEQUENCE [LARGE SCALE GENOMIC DNA]</scope>
    <scope>RNA EDITING</scope>
    <source>
        <strain>cv. Columbia</strain>
    </source>
</reference>
<reference key="3">
    <citation type="journal article" date="1999" name="Nature">
        <title>Sequence and analysis of chromosome 2 of the plant Arabidopsis thaliana.</title>
        <authorList>
            <person name="Lin X."/>
            <person name="Kaul S."/>
            <person name="Rounsley S.D."/>
            <person name="Shea T.P."/>
            <person name="Benito M.-I."/>
            <person name="Town C.D."/>
            <person name="Fujii C.Y."/>
            <person name="Mason T.M."/>
            <person name="Bowman C.L."/>
            <person name="Barnstead M.E."/>
            <person name="Feldblyum T.V."/>
            <person name="Buell C.R."/>
            <person name="Ketchum K.A."/>
            <person name="Lee J.J."/>
            <person name="Ronning C.M."/>
            <person name="Koo H.L."/>
            <person name="Moffat K.S."/>
            <person name="Cronin L.A."/>
            <person name="Shen M."/>
            <person name="Pai G."/>
            <person name="Van Aken S."/>
            <person name="Umayam L."/>
            <person name="Tallon L.J."/>
            <person name="Gill J.E."/>
            <person name="Adams M.D."/>
            <person name="Carrera A.J."/>
            <person name="Creasy T.H."/>
            <person name="Goodman H.M."/>
            <person name="Somerville C.R."/>
            <person name="Copenhaver G.P."/>
            <person name="Preuss D."/>
            <person name="Nierman W.C."/>
            <person name="White O."/>
            <person name="Eisen J.A."/>
            <person name="Salzberg S.L."/>
            <person name="Fraser C.M."/>
            <person name="Venter J.C."/>
        </authorList>
    </citation>
    <scope>NUCLEOTIDE SEQUENCE [LARGE SCALE GENOMIC DNA] (AT2G07681 AND AT2G07771)</scope>
    <source>
        <strain>cv. Columbia</strain>
    </source>
</reference>
<reference key="4">
    <citation type="submission" date="2004-07" db="EMBL/GenBank/DDBJ databases">
        <title>Arabidopsis ORF clones.</title>
        <authorList>
            <person name="Shinn P."/>
            <person name="Chen H."/>
            <person name="Cheuk R.F."/>
            <person name="Kim C.J."/>
            <person name="Ecker J.R."/>
        </authorList>
    </citation>
    <scope>NUCLEOTIDE SEQUENCE [LARGE SCALE MRNA] (AT2G07681 AND AT2G07771)</scope>
    <source>
        <strain>cv. Columbia</strain>
    </source>
</reference>
<reference key="5">
    <citation type="journal article" date="2008" name="Genetics">
        <title>Genetic architecture of mitochondrial editing in Arabidopsis thaliana.</title>
        <authorList>
            <person name="Bentolila S."/>
            <person name="Elliott L.E."/>
            <person name="Hanson M.R."/>
        </authorList>
    </citation>
    <scope>NUCLEOTIDE SEQUENCE [MRNA] OF 33-232</scope>
    <scope>RNA EDITING</scope>
    <source>
        <strain>cv. Columbia</strain>
        <strain>cv. Landsberg erecta</strain>
        <tissue>Rosette leaf</tissue>
    </source>
</reference>
<reference key="6">
    <citation type="journal article" date="1999" name="Proc. Natl. Acad. Sci. U.S.A.">
        <title>RNA editing in Arabidopsis mitochondria effects 441 C to U changes in ORFs.</title>
        <authorList>
            <person name="Giege P."/>
            <person name="Brennicke A."/>
        </authorList>
    </citation>
    <scope>RNA EDITING</scope>
</reference>
<reference key="7">
    <citation type="journal article" date="2008" name="Trends Plant Sci.">
        <title>Plant ABC proteins - a unified nomenclature and updated inventory.</title>
        <authorList>
            <person name="Verrier P.J."/>
            <person name="Bird D."/>
            <person name="Burla B."/>
            <person name="Dassa E."/>
            <person name="Forestier C."/>
            <person name="Geisler M."/>
            <person name="Klein M."/>
            <person name="Kolukisaoglu H.U."/>
            <person name="Lee Y."/>
            <person name="Martinoia E."/>
            <person name="Murphy A."/>
            <person name="Rea P.A."/>
            <person name="Samuels L."/>
            <person name="Schulz B."/>
            <person name="Spalding E.J."/>
            <person name="Yazaki K."/>
            <person name="Theodoulou F.L."/>
        </authorList>
    </citation>
    <scope>GENE FAMILY</scope>
    <scope>NOMENCLATURE</scope>
</reference>